<comment type="function">
    <text evidence="1">ATP-dependent carboxylate-amine ligase which exhibits weak glutamate--cysteine ligase activity.</text>
</comment>
<comment type="catalytic activity">
    <reaction evidence="1">
        <text>L-cysteine + L-glutamate + ATP = gamma-L-glutamyl-L-cysteine + ADP + phosphate + H(+)</text>
        <dbReference type="Rhea" id="RHEA:13285"/>
        <dbReference type="ChEBI" id="CHEBI:15378"/>
        <dbReference type="ChEBI" id="CHEBI:29985"/>
        <dbReference type="ChEBI" id="CHEBI:30616"/>
        <dbReference type="ChEBI" id="CHEBI:35235"/>
        <dbReference type="ChEBI" id="CHEBI:43474"/>
        <dbReference type="ChEBI" id="CHEBI:58173"/>
        <dbReference type="ChEBI" id="CHEBI:456216"/>
        <dbReference type="EC" id="6.3.2.2"/>
    </reaction>
</comment>
<comment type="similarity">
    <text evidence="1">Belongs to the glutamate--cysteine ligase type 2 family. YbdK subfamily.</text>
</comment>
<reference key="1">
    <citation type="journal article" date="2004" name="Proc. Natl. Acad. Sci. U.S.A.">
        <title>Genomic plasticity of the causative agent of melioidosis, Burkholderia pseudomallei.</title>
        <authorList>
            <person name="Holden M.T.G."/>
            <person name="Titball R.W."/>
            <person name="Peacock S.J."/>
            <person name="Cerdeno-Tarraga A.-M."/>
            <person name="Atkins T."/>
            <person name="Crossman L.C."/>
            <person name="Pitt T."/>
            <person name="Churcher C."/>
            <person name="Mungall K.L."/>
            <person name="Bentley S.D."/>
            <person name="Sebaihia M."/>
            <person name="Thomson N.R."/>
            <person name="Bason N."/>
            <person name="Beacham I.R."/>
            <person name="Brooks K."/>
            <person name="Brown K.A."/>
            <person name="Brown N.F."/>
            <person name="Challis G.L."/>
            <person name="Cherevach I."/>
            <person name="Chillingworth T."/>
            <person name="Cronin A."/>
            <person name="Crossett B."/>
            <person name="Davis P."/>
            <person name="DeShazer D."/>
            <person name="Feltwell T."/>
            <person name="Fraser A."/>
            <person name="Hance Z."/>
            <person name="Hauser H."/>
            <person name="Holroyd S."/>
            <person name="Jagels K."/>
            <person name="Keith K.E."/>
            <person name="Maddison M."/>
            <person name="Moule S."/>
            <person name="Price C."/>
            <person name="Quail M.A."/>
            <person name="Rabbinowitsch E."/>
            <person name="Rutherford K."/>
            <person name="Sanders M."/>
            <person name="Simmonds M."/>
            <person name="Songsivilai S."/>
            <person name="Stevens K."/>
            <person name="Tumapa S."/>
            <person name="Vesaratchavest M."/>
            <person name="Whitehead S."/>
            <person name="Yeats C."/>
            <person name="Barrell B.G."/>
            <person name="Oyston P.C.F."/>
            <person name="Parkhill J."/>
        </authorList>
    </citation>
    <scope>NUCLEOTIDE SEQUENCE [LARGE SCALE GENOMIC DNA]</scope>
    <source>
        <strain>K96243</strain>
    </source>
</reference>
<organism>
    <name type="scientific">Burkholderia pseudomallei (strain K96243)</name>
    <dbReference type="NCBI Taxonomy" id="272560"/>
    <lineage>
        <taxon>Bacteria</taxon>
        <taxon>Pseudomonadati</taxon>
        <taxon>Pseudomonadota</taxon>
        <taxon>Betaproteobacteria</taxon>
        <taxon>Burkholderiales</taxon>
        <taxon>Burkholderiaceae</taxon>
        <taxon>Burkholderia</taxon>
        <taxon>pseudomallei group</taxon>
    </lineage>
</organism>
<evidence type="ECO:0000255" key="1">
    <source>
        <dbReference type="HAMAP-Rule" id="MF_01609"/>
    </source>
</evidence>
<name>GCS2_BURPS</name>
<feature type="chain" id="PRO_0000218190" description="Putative glutamate--cysteine ligase 2">
    <location>
        <begin position="1"/>
        <end position="371"/>
    </location>
</feature>
<accession>Q63Z36</accession>
<keyword id="KW-0067">ATP-binding</keyword>
<keyword id="KW-0436">Ligase</keyword>
<keyword id="KW-0547">Nucleotide-binding</keyword>
<keyword id="KW-1185">Reference proteome</keyword>
<protein>
    <recommendedName>
        <fullName evidence="1">Putative glutamate--cysteine ligase 2</fullName>
        <ecNumber evidence="1">6.3.2.2</ecNumber>
    </recommendedName>
    <alternativeName>
        <fullName evidence="1">Gamma-glutamylcysteine synthetase 2</fullName>
        <shortName evidence="1">GCS 2</shortName>
        <shortName evidence="1">Gamma-GCS 2</shortName>
    </alternativeName>
</protein>
<sequence length="371" mass="41779">MALETFVNSEPFTFGVELEIQIVNTHNYDLTKAASDLMRLIKDAKFPGNITPEITESMIELSTGICRTHDQALGELHAIRDTLVSAADQLNVGLCGGGTHAFQQWSERQIFDAPRFQYISELYGYLAKQFTVFGQHVHIGCPDADSALFLLHSMSRFIPHFIALSASSPYVQNVDTGFHSARLNSVFAFPLSGRAPFVLTWHGFEEYFTKMVNTGVVNSMKDFYWDIRPKPGYGTIEVRVMDTPLSVDRAAAIACYIQTLARYLLIDRPLKLSEDDYLVYTFNRFEACRFGLEGTCVNPQTGERRTIAEDILDTLDRIAPHAAALGSRAALDEIGALAKARVNDASWLRTIFKQEKSLNETVRQQCLRWRE</sequence>
<proteinExistence type="inferred from homology"/>
<gene>
    <name type="ordered locus">BPSL0001</name>
</gene>
<dbReference type="EC" id="6.3.2.2" evidence="1"/>
<dbReference type="EMBL" id="BX571965">
    <property type="protein sequence ID" value="CAH33984.1"/>
    <property type="molecule type" value="Genomic_DNA"/>
</dbReference>
<dbReference type="RefSeq" id="WP_004195787.1">
    <property type="nucleotide sequence ID" value="NZ_CP009538.1"/>
</dbReference>
<dbReference type="RefSeq" id="YP_106626.1">
    <property type="nucleotide sequence ID" value="NC_006350.1"/>
</dbReference>
<dbReference type="SMR" id="Q63Z36"/>
<dbReference type="STRING" id="272560.BPSL0001"/>
<dbReference type="KEGG" id="bps:BPSL0001"/>
<dbReference type="PATRIC" id="fig|272560.51.peg.1749"/>
<dbReference type="eggNOG" id="COG2170">
    <property type="taxonomic scope" value="Bacteria"/>
</dbReference>
<dbReference type="Proteomes" id="UP000000605">
    <property type="component" value="Chromosome 1"/>
</dbReference>
<dbReference type="GO" id="GO:0005524">
    <property type="term" value="F:ATP binding"/>
    <property type="evidence" value="ECO:0007669"/>
    <property type="project" value="UniProtKB-KW"/>
</dbReference>
<dbReference type="GO" id="GO:0004357">
    <property type="term" value="F:glutamate-cysteine ligase activity"/>
    <property type="evidence" value="ECO:0007669"/>
    <property type="project" value="UniProtKB-EC"/>
</dbReference>
<dbReference type="GO" id="GO:0042398">
    <property type="term" value="P:modified amino acid biosynthetic process"/>
    <property type="evidence" value="ECO:0007669"/>
    <property type="project" value="InterPro"/>
</dbReference>
<dbReference type="Gene3D" id="3.30.590.20">
    <property type="match status" value="1"/>
</dbReference>
<dbReference type="HAMAP" id="MF_01609">
    <property type="entry name" value="Glu_cys_ligase_2"/>
    <property type="match status" value="1"/>
</dbReference>
<dbReference type="InterPro" id="IPR050141">
    <property type="entry name" value="GCL_type2/YbdK_subfam"/>
</dbReference>
<dbReference type="InterPro" id="IPR006336">
    <property type="entry name" value="GCS2"/>
</dbReference>
<dbReference type="InterPro" id="IPR014746">
    <property type="entry name" value="Gln_synth/guanido_kin_cat_dom"/>
</dbReference>
<dbReference type="InterPro" id="IPR011793">
    <property type="entry name" value="YbdK"/>
</dbReference>
<dbReference type="NCBIfam" id="TIGR02050">
    <property type="entry name" value="gshA_cyan_rel"/>
    <property type="match status" value="1"/>
</dbReference>
<dbReference type="NCBIfam" id="NF010040">
    <property type="entry name" value="PRK13516.1"/>
    <property type="match status" value="1"/>
</dbReference>
<dbReference type="PANTHER" id="PTHR36510">
    <property type="entry name" value="GLUTAMATE--CYSTEINE LIGASE 2-RELATED"/>
    <property type="match status" value="1"/>
</dbReference>
<dbReference type="PANTHER" id="PTHR36510:SF1">
    <property type="entry name" value="GLUTAMATE--CYSTEINE LIGASE 2-RELATED"/>
    <property type="match status" value="1"/>
</dbReference>
<dbReference type="Pfam" id="PF04107">
    <property type="entry name" value="GCS2"/>
    <property type="match status" value="1"/>
</dbReference>
<dbReference type="SUPFAM" id="SSF55931">
    <property type="entry name" value="Glutamine synthetase/guanido kinase"/>
    <property type="match status" value="1"/>
</dbReference>